<proteinExistence type="inferred from homology"/>
<sequence length="368" mass="41626">MSILEKVQPIETMLPERYYTMSTEDMEKRVREIKEKMGETLFIPGHHYQKDEVVQFSDAAGDSLQLAQVAASNKEAKYIVFCGVHFMAETADMLTTDEQVVILPDMRAGCSMADMADIEQTERAWEELTKLFGDTMIPLTYVNSTAAIKAFCGRNGGATVTSSNAKQMVSWAFTQKERLVFLPDQHLGRNTAYDLGIPLDKMAVWDPHTDSLEYDGDIEEIQVILWKGHCSVHQNFTVKNIENVRKNHPDMNIIVHPECCYEVVAASDYAGSTKYIIDMIESAPSGSKWAIGTEMNLVNRIIQQHPDKEIVSLNPFMCPCLTMNRIDLPHLLWALETIERGEEINVISVDKQVTEEAVLALNRMLERV</sequence>
<gene>
    <name evidence="1" type="primary">nadA</name>
    <name type="ordered locus">BA_4660</name>
    <name type="ordered locus">GBAA_4660</name>
    <name type="ordered locus">BAS4325</name>
</gene>
<keyword id="KW-0004">4Fe-4S</keyword>
<keyword id="KW-0963">Cytoplasm</keyword>
<keyword id="KW-0408">Iron</keyword>
<keyword id="KW-0411">Iron-sulfur</keyword>
<keyword id="KW-0479">Metal-binding</keyword>
<keyword id="KW-0662">Pyridine nucleotide biosynthesis</keyword>
<keyword id="KW-1185">Reference proteome</keyword>
<keyword id="KW-0808">Transferase</keyword>
<comment type="function">
    <text evidence="1">Catalyzes the condensation of iminoaspartate with dihydroxyacetone phosphate to form quinolinate.</text>
</comment>
<comment type="catalytic activity">
    <reaction evidence="1">
        <text>iminosuccinate + dihydroxyacetone phosphate = quinolinate + phosphate + 2 H2O + H(+)</text>
        <dbReference type="Rhea" id="RHEA:25888"/>
        <dbReference type="ChEBI" id="CHEBI:15377"/>
        <dbReference type="ChEBI" id="CHEBI:15378"/>
        <dbReference type="ChEBI" id="CHEBI:29959"/>
        <dbReference type="ChEBI" id="CHEBI:43474"/>
        <dbReference type="ChEBI" id="CHEBI:57642"/>
        <dbReference type="ChEBI" id="CHEBI:77875"/>
        <dbReference type="EC" id="2.5.1.72"/>
    </reaction>
    <physiologicalReaction direction="left-to-right" evidence="1">
        <dbReference type="Rhea" id="RHEA:25889"/>
    </physiologicalReaction>
</comment>
<comment type="cofactor">
    <cofactor evidence="1">
        <name>[4Fe-4S] cluster</name>
        <dbReference type="ChEBI" id="CHEBI:49883"/>
    </cofactor>
    <text evidence="1">Binds 1 [4Fe-4S] cluster per subunit.</text>
</comment>
<comment type="pathway">
    <text evidence="1">Cofactor biosynthesis; NAD(+) biosynthesis; quinolinate from iminoaspartate: step 1/1.</text>
</comment>
<comment type="subcellular location">
    <subcellularLocation>
        <location evidence="1">Cytoplasm</location>
    </subcellularLocation>
</comment>
<comment type="similarity">
    <text evidence="1">Belongs to the quinolinate synthase family. Type 3 subfamily.</text>
</comment>
<dbReference type="EC" id="2.5.1.72" evidence="1"/>
<dbReference type="EMBL" id="AE016879">
    <property type="protein sequence ID" value="AAP28361.1"/>
    <property type="molecule type" value="Genomic_DNA"/>
</dbReference>
<dbReference type="EMBL" id="AE017334">
    <property type="protein sequence ID" value="AAT33782.1"/>
    <property type="molecule type" value="Genomic_DNA"/>
</dbReference>
<dbReference type="EMBL" id="AE017225">
    <property type="protein sequence ID" value="AAT56623.1"/>
    <property type="molecule type" value="Genomic_DNA"/>
</dbReference>
<dbReference type="RefSeq" id="NP_846875.1">
    <property type="nucleotide sequence ID" value="NC_003997.3"/>
</dbReference>
<dbReference type="RefSeq" id="WP_000025290.1">
    <property type="nucleotide sequence ID" value="NZ_WXXJ01000027.1"/>
</dbReference>
<dbReference type="RefSeq" id="YP_030572.1">
    <property type="nucleotide sequence ID" value="NC_005945.1"/>
</dbReference>
<dbReference type="SMR" id="Q81LG1"/>
<dbReference type="STRING" id="261594.GBAA_4660"/>
<dbReference type="DNASU" id="1083657"/>
<dbReference type="GeneID" id="45024301"/>
<dbReference type="KEGG" id="ban:BA_4660"/>
<dbReference type="KEGG" id="banh:HYU01_22720"/>
<dbReference type="KEGG" id="bar:GBAA_4660"/>
<dbReference type="KEGG" id="bat:BAS4325"/>
<dbReference type="PATRIC" id="fig|198094.11.peg.4625"/>
<dbReference type="eggNOG" id="COG0379">
    <property type="taxonomic scope" value="Bacteria"/>
</dbReference>
<dbReference type="HOGENOM" id="CLU_047382_2_0_9"/>
<dbReference type="OMA" id="CFCSTMN"/>
<dbReference type="OrthoDB" id="9801204at2"/>
<dbReference type="UniPathway" id="UPA00253">
    <property type="reaction ID" value="UER00327"/>
</dbReference>
<dbReference type="Proteomes" id="UP000000427">
    <property type="component" value="Chromosome"/>
</dbReference>
<dbReference type="Proteomes" id="UP000000594">
    <property type="component" value="Chromosome"/>
</dbReference>
<dbReference type="GO" id="GO:0005829">
    <property type="term" value="C:cytosol"/>
    <property type="evidence" value="ECO:0007669"/>
    <property type="project" value="TreeGrafter"/>
</dbReference>
<dbReference type="GO" id="GO:0051539">
    <property type="term" value="F:4 iron, 4 sulfur cluster binding"/>
    <property type="evidence" value="ECO:0007669"/>
    <property type="project" value="UniProtKB-KW"/>
</dbReference>
<dbReference type="GO" id="GO:0046872">
    <property type="term" value="F:metal ion binding"/>
    <property type="evidence" value="ECO:0007669"/>
    <property type="project" value="UniProtKB-KW"/>
</dbReference>
<dbReference type="GO" id="GO:0008987">
    <property type="term" value="F:quinolinate synthetase A activity"/>
    <property type="evidence" value="ECO:0007669"/>
    <property type="project" value="UniProtKB-UniRule"/>
</dbReference>
<dbReference type="GO" id="GO:0034628">
    <property type="term" value="P:'de novo' NAD biosynthetic process from L-aspartate"/>
    <property type="evidence" value="ECO:0007669"/>
    <property type="project" value="TreeGrafter"/>
</dbReference>
<dbReference type="FunFam" id="3.40.50.10800:FF:000001">
    <property type="entry name" value="Quinolinate synthase A"/>
    <property type="match status" value="1"/>
</dbReference>
<dbReference type="Gene3D" id="3.40.50.10800">
    <property type="entry name" value="NadA-like"/>
    <property type="match status" value="3"/>
</dbReference>
<dbReference type="HAMAP" id="MF_00569">
    <property type="entry name" value="NadA_type3"/>
    <property type="match status" value="1"/>
</dbReference>
<dbReference type="InterPro" id="IPR003473">
    <property type="entry name" value="NadA"/>
</dbReference>
<dbReference type="InterPro" id="IPR036094">
    <property type="entry name" value="NadA_sf"/>
</dbReference>
<dbReference type="InterPro" id="IPR023515">
    <property type="entry name" value="Quinolinate_synth_A_type3"/>
</dbReference>
<dbReference type="NCBIfam" id="TIGR00550">
    <property type="entry name" value="nadA"/>
    <property type="match status" value="1"/>
</dbReference>
<dbReference type="NCBIfam" id="NF006880">
    <property type="entry name" value="PRK09375.2-1"/>
    <property type="match status" value="1"/>
</dbReference>
<dbReference type="NCBIfam" id="NF006883">
    <property type="entry name" value="PRK09375.2-4"/>
    <property type="match status" value="1"/>
</dbReference>
<dbReference type="PANTHER" id="PTHR30573:SF0">
    <property type="entry name" value="QUINOLINATE SYNTHASE, CHLOROPLASTIC"/>
    <property type="match status" value="1"/>
</dbReference>
<dbReference type="PANTHER" id="PTHR30573">
    <property type="entry name" value="QUINOLINATE SYNTHETASE A"/>
    <property type="match status" value="1"/>
</dbReference>
<dbReference type="Pfam" id="PF02445">
    <property type="entry name" value="NadA"/>
    <property type="match status" value="1"/>
</dbReference>
<dbReference type="SUPFAM" id="SSF142754">
    <property type="entry name" value="NadA-like"/>
    <property type="match status" value="1"/>
</dbReference>
<organism>
    <name type="scientific">Bacillus anthracis</name>
    <dbReference type="NCBI Taxonomy" id="1392"/>
    <lineage>
        <taxon>Bacteria</taxon>
        <taxon>Bacillati</taxon>
        <taxon>Bacillota</taxon>
        <taxon>Bacilli</taxon>
        <taxon>Bacillales</taxon>
        <taxon>Bacillaceae</taxon>
        <taxon>Bacillus</taxon>
        <taxon>Bacillus cereus group</taxon>
    </lineage>
</organism>
<name>NADA_BACAN</name>
<evidence type="ECO:0000255" key="1">
    <source>
        <dbReference type="HAMAP-Rule" id="MF_00569"/>
    </source>
</evidence>
<feature type="chain" id="PRO_1000024984" description="Quinolinate synthase">
    <location>
        <begin position="1"/>
        <end position="368"/>
    </location>
</feature>
<feature type="binding site" evidence="1">
    <location>
        <position position="46"/>
    </location>
    <ligand>
        <name>iminosuccinate</name>
        <dbReference type="ChEBI" id="CHEBI:77875"/>
    </ligand>
</feature>
<feature type="binding site" evidence="1">
    <location>
        <position position="63"/>
    </location>
    <ligand>
        <name>iminosuccinate</name>
        <dbReference type="ChEBI" id="CHEBI:77875"/>
    </ligand>
</feature>
<feature type="binding site" evidence="1">
    <location>
        <position position="110"/>
    </location>
    <ligand>
        <name>[4Fe-4S] cluster</name>
        <dbReference type="ChEBI" id="CHEBI:49883"/>
    </ligand>
</feature>
<feature type="binding site" evidence="1">
    <location>
        <begin position="141"/>
        <end position="143"/>
    </location>
    <ligand>
        <name>iminosuccinate</name>
        <dbReference type="ChEBI" id="CHEBI:77875"/>
    </ligand>
</feature>
<feature type="binding site" evidence="1">
    <location>
        <position position="162"/>
    </location>
    <ligand>
        <name>iminosuccinate</name>
        <dbReference type="ChEBI" id="CHEBI:77875"/>
    </ligand>
</feature>
<feature type="binding site" evidence="1">
    <location>
        <position position="230"/>
    </location>
    <ligand>
        <name>[4Fe-4S] cluster</name>
        <dbReference type="ChEBI" id="CHEBI:49883"/>
    </ligand>
</feature>
<feature type="binding site" evidence="1">
    <location>
        <begin position="256"/>
        <end position="258"/>
    </location>
    <ligand>
        <name>iminosuccinate</name>
        <dbReference type="ChEBI" id="CHEBI:77875"/>
    </ligand>
</feature>
<feature type="binding site" evidence="1">
    <location>
        <position position="273"/>
    </location>
    <ligand>
        <name>iminosuccinate</name>
        <dbReference type="ChEBI" id="CHEBI:77875"/>
    </ligand>
</feature>
<feature type="binding site" evidence="1">
    <location>
        <position position="320"/>
    </location>
    <ligand>
        <name>[4Fe-4S] cluster</name>
        <dbReference type="ChEBI" id="CHEBI:49883"/>
    </ligand>
</feature>
<reference key="1">
    <citation type="journal article" date="2003" name="Nature">
        <title>The genome sequence of Bacillus anthracis Ames and comparison to closely related bacteria.</title>
        <authorList>
            <person name="Read T.D."/>
            <person name="Peterson S.N."/>
            <person name="Tourasse N.J."/>
            <person name="Baillie L.W."/>
            <person name="Paulsen I.T."/>
            <person name="Nelson K.E."/>
            <person name="Tettelin H."/>
            <person name="Fouts D.E."/>
            <person name="Eisen J.A."/>
            <person name="Gill S.R."/>
            <person name="Holtzapple E.K."/>
            <person name="Okstad O.A."/>
            <person name="Helgason E."/>
            <person name="Rilstone J."/>
            <person name="Wu M."/>
            <person name="Kolonay J.F."/>
            <person name="Beanan M.J."/>
            <person name="Dodson R.J."/>
            <person name="Brinkac L.M."/>
            <person name="Gwinn M.L."/>
            <person name="DeBoy R.T."/>
            <person name="Madpu R."/>
            <person name="Daugherty S.C."/>
            <person name="Durkin A.S."/>
            <person name="Haft D.H."/>
            <person name="Nelson W.C."/>
            <person name="Peterson J.D."/>
            <person name="Pop M."/>
            <person name="Khouri H.M."/>
            <person name="Radune D."/>
            <person name="Benton J.L."/>
            <person name="Mahamoud Y."/>
            <person name="Jiang L."/>
            <person name="Hance I.R."/>
            <person name="Weidman J.F."/>
            <person name="Berry K.J."/>
            <person name="Plaut R.D."/>
            <person name="Wolf A.M."/>
            <person name="Watkins K.L."/>
            <person name="Nierman W.C."/>
            <person name="Hazen A."/>
            <person name="Cline R.T."/>
            <person name="Redmond C."/>
            <person name="Thwaite J.E."/>
            <person name="White O."/>
            <person name="Salzberg S.L."/>
            <person name="Thomason B."/>
            <person name="Friedlander A.M."/>
            <person name="Koehler T.M."/>
            <person name="Hanna P.C."/>
            <person name="Kolstoe A.-B."/>
            <person name="Fraser C.M."/>
        </authorList>
    </citation>
    <scope>NUCLEOTIDE SEQUENCE [LARGE SCALE GENOMIC DNA]</scope>
    <source>
        <strain>Ames / isolate Porton</strain>
    </source>
</reference>
<reference key="2">
    <citation type="submission" date="2004-01" db="EMBL/GenBank/DDBJ databases">
        <title>Complete genome sequence of Bacillus anthracis Sterne.</title>
        <authorList>
            <person name="Brettin T.S."/>
            <person name="Bruce D."/>
            <person name="Challacombe J.F."/>
            <person name="Gilna P."/>
            <person name="Han C."/>
            <person name="Hill K."/>
            <person name="Hitchcock P."/>
            <person name="Jackson P."/>
            <person name="Keim P."/>
            <person name="Longmire J."/>
            <person name="Lucas S."/>
            <person name="Okinaka R."/>
            <person name="Richardson P."/>
            <person name="Rubin E."/>
            <person name="Tice H."/>
        </authorList>
    </citation>
    <scope>NUCLEOTIDE SEQUENCE [LARGE SCALE GENOMIC DNA]</scope>
    <source>
        <strain>Sterne</strain>
    </source>
</reference>
<reference key="3">
    <citation type="journal article" date="2009" name="J. Bacteriol.">
        <title>The complete genome sequence of Bacillus anthracis Ames 'Ancestor'.</title>
        <authorList>
            <person name="Ravel J."/>
            <person name="Jiang L."/>
            <person name="Stanley S.T."/>
            <person name="Wilson M.R."/>
            <person name="Decker R.S."/>
            <person name="Read T.D."/>
            <person name="Worsham P."/>
            <person name="Keim P.S."/>
            <person name="Salzberg S.L."/>
            <person name="Fraser-Liggett C.M."/>
            <person name="Rasko D.A."/>
        </authorList>
    </citation>
    <scope>NUCLEOTIDE SEQUENCE [LARGE SCALE GENOMIC DNA]</scope>
    <source>
        <strain>Ames ancestor</strain>
    </source>
</reference>
<protein>
    <recommendedName>
        <fullName evidence="1">Quinolinate synthase</fullName>
        <ecNumber evidence="1">2.5.1.72</ecNumber>
    </recommendedName>
</protein>
<accession>Q81LG1</accession>
<accession>Q6HSW6</accession>
<accession>Q6KM56</accession>